<feature type="chain" id="PRO_0000325687" description="Uroporphyrinogen decarboxylase">
    <location>
        <begin position="1"/>
        <end position="346"/>
    </location>
</feature>
<feature type="binding site" evidence="1">
    <location>
        <begin position="21"/>
        <end position="25"/>
    </location>
    <ligand>
        <name>substrate</name>
    </ligand>
</feature>
<feature type="binding site" evidence="1">
    <location>
        <position position="71"/>
    </location>
    <ligand>
        <name>substrate</name>
    </ligand>
</feature>
<feature type="binding site" evidence="1">
    <location>
        <position position="146"/>
    </location>
    <ligand>
        <name>substrate</name>
    </ligand>
</feature>
<feature type="binding site" evidence="1">
    <location>
        <position position="201"/>
    </location>
    <ligand>
        <name>substrate</name>
    </ligand>
</feature>
<feature type="binding site" evidence="1">
    <location>
        <position position="316"/>
    </location>
    <ligand>
        <name>substrate</name>
    </ligand>
</feature>
<feature type="site" description="Transition state stabilizer" evidence="1">
    <location>
        <position position="71"/>
    </location>
</feature>
<sequence>MKQIINPLKGNDNKIPIWFMRQAGRYLPEYKKVRETTKNFLDFCYDVNKATEVTLQPIKRYGFDAAIIFSDILVLPHAFGWEVDFKENIGPILKQFKSQEDFKYLQINPNDKLEKVYEIIKKVKKELPSPTSLIGFAGSPWTVMSYMLEGKGKQDFKTSKKFIYENKILAEELLNFITEKTADHLINQAKSGVDVLKLFDSWSGVLAEEEFTEFVIEPTKKIVLKVKEVFPKTPIIAFPKGAGLLYEKFIKEVPIDILAVDQMVPLEKMKEWSDKVIVQGNLDPVVLLTNKEIIKEKTYKILQAMKGKNFIFNLGHGILPETPTENVEFLTEYVRLYEEKNSNSTF</sequence>
<organism>
    <name type="scientific">Rickettsia massiliae (strain Mtu5)</name>
    <dbReference type="NCBI Taxonomy" id="416276"/>
    <lineage>
        <taxon>Bacteria</taxon>
        <taxon>Pseudomonadati</taxon>
        <taxon>Pseudomonadota</taxon>
        <taxon>Alphaproteobacteria</taxon>
        <taxon>Rickettsiales</taxon>
        <taxon>Rickettsiaceae</taxon>
        <taxon>Rickettsieae</taxon>
        <taxon>Rickettsia</taxon>
        <taxon>spotted fever group</taxon>
    </lineage>
</organism>
<accession>A8F331</accession>
<evidence type="ECO:0000255" key="1">
    <source>
        <dbReference type="HAMAP-Rule" id="MF_00218"/>
    </source>
</evidence>
<evidence type="ECO:0000305" key="2"/>
<gene>
    <name evidence="1" type="primary">hemE</name>
    <name type="ordered locus">RMA_1389</name>
</gene>
<dbReference type="EC" id="4.1.1.37" evidence="1"/>
<dbReference type="EMBL" id="CP000683">
    <property type="protein sequence ID" value="ABV85317.1"/>
    <property type="status" value="ALT_INIT"/>
    <property type="molecule type" value="Genomic_DNA"/>
</dbReference>
<dbReference type="RefSeq" id="WP_041404921.1">
    <property type="nucleotide sequence ID" value="NC_009900.1"/>
</dbReference>
<dbReference type="SMR" id="A8F331"/>
<dbReference type="KEGG" id="rms:RMA_1389"/>
<dbReference type="HOGENOM" id="CLU_040933_0_0_5"/>
<dbReference type="UniPathway" id="UPA00251">
    <property type="reaction ID" value="UER00321"/>
</dbReference>
<dbReference type="Proteomes" id="UP000001311">
    <property type="component" value="Chromosome"/>
</dbReference>
<dbReference type="GO" id="GO:0005829">
    <property type="term" value="C:cytosol"/>
    <property type="evidence" value="ECO:0007669"/>
    <property type="project" value="TreeGrafter"/>
</dbReference>
<dbReference type="GO" id="GO:0004853">
    <property type="term" value="F:uroporphyrinogen decarboxylase activity"/>
    <property type="evidence" value="ECO:0007669"/>
    <property type="project" value="UniProtKB-UniRule"/>
</dbReference>
<dbReference type="GO" id="GO:0006782">
    <property type="term" value="P:protoporphyrinogen IX biosynthetic process"/>
    <property type="evidence" value="ECO:0007669"/>
    <property type="project" value="UniProtKB-UniRule"/>
</dbReference>
<dbReference type="CDD" id="cd00717">
    <property type="entry name" value="URO-D"/>
    <property type="match status" value="1"/>
</dbReference>
<dbReference type="FunFam" id="3.20.20.210:FF:000007">
    <property type="entry name" value="Uroporphyrinogen decarboxylase"/>
    <property type="match status" value="1"/>
</dbReference>
<dbReference type="Gene3D" id="3.20.20.210">
    <property type="match status" value="1"/>
</dbReference>
<dbReference type="HAMAP" id="MF_00218">
    <property type="entry name" value="URO_D"/>
    <property type="match status" value="1"/>
</dbReference>
<dbReference type="InterPro" id="IPR038071">
    <property type="entry name" value="UROD/MetE-like_sf"/>
</dbReference>
<dbReference type="InterPro" id="IPR006361">
    <property type="entry name" value="Uroporphyrinogen_deCO2ase_HemE"/>
</dbReference>
<dbReference type="InterPro" id="IPR000257">
    <property type="entry name" value="Uroporphyrinogen_deCOase"/>
</dbReference>
<dbReference type="NCBIfam" id="TIGR01464">
    <property type="entry name" value="hemE"/>
    <property type="match status" value="1"/>
</dbReference>
<dbReference type="PANTHER" id="PTHR21091">
    <property type="entry name" value="METHYLTETRAHYDROFOLATE:HOMOCYSTEINE METHYLTRANSFERASE RELATED"/>
    <property type="match status" value="1"/>
</dbReference>
<dbReference type="PANTHER" id="PTHR21091:SF169">
    <property type="entry name" value="UROPORPHYRINOGEN DECARBOXYLASE"/>
    <property type="match status" value="1"/>
</dbReference>
<dbReference type="Pfam" id="PF01208">
    <property type="entry name" value="URO-D"/>
    <property type="match status" value="1"/>
</dbReference>
<dbReference type="SUPFAM" id="SSF51726">
    <property type="entry name" value="UROD/MetE-like"/>
    <property type="match status" value="1"/>
</dbReference>
<dbReference type="PROSITE" id="PS00906">
    <property type="entry name" value="UROD_1"/>
    <property type="match status" value="1"/>
</dbReference>
<dbReference type="PROSITE" id="PS00907">
    <property type="entry name" value="UROD_2"/>
    <property type="match status" value="1"/>
</dbReference>
<reference key="1">
    <citation type="journal article" date="2007" name="Genome Res.">
        <title>Lateral gene transfer between obligate intracellular bacteria: evidence from the Rickettsia massiliae genome.</title>
        <authorList>
            <person name="Blanc G."/>
            <person name="Ogata H."/>
            <person name="Robert C."/>
            <person name="Audic S."/>
            <person name="Claverie J.-M."/>
            <person name="Raoult D."/>
        </authorList>
    </citation>
    <scope>NUCLEOTIDE SEQUENCE [LARGE SCALE GENOMIC DNA]</scope>
    <source>
        <strain>Mtu5</strain>
    </source>
</reference>
<name>DCUP_RICM5</name>
<proteinExistence type="inferred from homology"/>
<keyword id="KW-0963">Cytoplasm</keyword>
<keyword id="KW-0210">Decarboxylase</keyword>
<keyword id="KW-0456">Lyase</keyword>
<keyword id="KW-0627">Porphyrin biosynthesis</keyword>
<protein>
    <recommendedName>
        <fullName evidence="1">Uroporphyrinogen decarboxylase</fullName>
        <shortName evidence="1">UPD</shortName>
        <shortName evidence="1">URO-D</shortName>
        <ecNumber evidence="1">4.1.1.37</ecNumber>
    </recommendedName>
</protein>
<comment type="function">
    <text evidence="1">Catalyzes the decarboxylation of four acetate groups of uroporphyrinogen-III to yield coproporphyrinogen-III.</text>
</comment>
<comment type="catalytic activity">
    <reaction evidence="1">
        <text>uroporphyrinogen III + 4 H(+) = coproporphyrinogen III + 4 CO2</text>
        <dbReference type="Rhea" id="RHEA:19865"/>
        <dbReference type="ChEBI" id="CHEBI:15378"/>
        <dbReference type="ChEBI" id="CHEBI:16526"/>
        <dbReference type="ChEBI" id="CHEBI:57308"/>
        <dbReference type="ChEBI" id="CHEBI:57309"/>
        <dbReference type="EC" id="4.1.1.37"/>
    </reaction>
</comment>
<comment type="pathway">
    <text evidence="1">Porphyrin-containing compound metabolism; protoporphyrin-IX biosynthesis; coproporphyrinogen-III from 5-aminolevulinate: step 4/4.</text>
</comment>
<comment type="subunit">
    <text evidence="1">Homodimer.</text>
</comment>
<comment type="subcellular location">
    <subcellularLocation>
        <location evidence="1">Cytoplasm</location>
    </subcellularLocation>
</comment>
<comment type="similarity">
    <text evidence="1">Belongs to the uroporphyrinogen decarboxylase family.</text>
</comment>
<comment type="sequence caution" evidence="2">
    <conflict type="erroneous initiation">
        <sequence resource="EMBL-CDS" id="ABV85317"/>
    </conflict>
</comment>